<reference key="1">
    <citation type="submission" date="2008-01" db="EMBL/GenBank/DDBJ databases">
        <title>Complete sequence of Shewanella halifaxensis HAW-EB4.</title>
        <authorList>
            <consortium name="US DOE Joint Genome Institute"/>
            <person name="Copeland A."/>
            <person name="Lucas S."/>
            <person name="Lapidus A."/>
            <person name="Glavina del Rio T."/>
            <person name="Dalin E."/>
            <person name="Tice H."/>
            <person name="Bruce D."/>
            <person name="Goodwin L."/>
            <person name="Pitluck S."/>
            <person name="Sims D."/>
            <person name="Brettin T."/>
            <person name="Detter J.C."/>
            <person name="Han C."/>
            <person name="Kuske C.R."/>
            <person name="Schmutz J."/>
            <person name="Larimer F."/>
            <person name="Land M."/>
            <person name="Hauser L."/>
            <person name="Kyrpides N."/>
            <person name="Kim E."/>
            <person name="Zhao J.-S."/>
            <person name="Richardson P."/>
        </authorList>
    </citation>
    <scope>NUCLEOTIDE SEQUENCE [LARGE SCALE GENOMIC DNA]</scope>
    <source>
        <strain>HAW-EB4</strain>
    </source>
</reference>
<gene>
    <name evidence="1" type="primary">proB</name>
    <name type="ordered locus">Shal_3170</name>
</gene>
<proteinExistence type="inferred from homology"/>
<sequence length="372" mass="39827">MNLSEISYRRVVVKLGTSVLTSGSLKLDKAHMVELARQMACLMKAGVEVVLCTSGAIAAGKEHLGYPQLPDTIASKQLLAAVGQSQLILAWSQLFSIYGLHVGQLLLTRADLHDRERYLNARDSLNALLNNGIIPIINENDAVATAEIKVGDNDNLSARAALLCDADLLILLTDQKGLFDADPRKNPDAKLITEVQNIDDSLRMLAGGAVSGLGTGGMATKLEAADIARRAGVEVVIASGHHKDVIQNVVCAKPVGTHFTALEHPLESRKQWILAGPKARGQVVLDTGAITAVTQKGRSLLSKGIIEVNGLFQRGDTIELVDTKGKVYAKGMSRYGSLDVSKIAGKHSDNIEEILGYDYGDAVVHRNDMVVL</sequence>
<name>PROB_SHEHH</name>
<feature type="chain" id="PRO_1000081106" description="Glutamate 5-kinase">
    <location>
        <begin position="1"/>
        <end position="372"/>
    </location>
</feature>
<feature type="domain" description="PUA" evidence="1">
    <location>
        <begin position="280"/>
        <end position="358"/>
    </location>
</feature>
<feature type="binding site" evidence="1">
    <location>
        <position position="14"/>
    </location>
    <ligand>
        <name>ATP</name>
        <dbReference type="ChEBI" id="CHEBI:30616"/>
    </ligand>
</feature>
<feature type="binding site" evidence="1">
    <location>
        <position position="54"/>
    </location>
    <ligand>
        <name>substrate</name>
    </ligand>
</feature>
<feature type="binding site" evidence="1">
    <location>
        <position position="141"/>
    </location>
    <ligand>
        <name>substrate</name>
    </ligand>
</feature>
<feature type="binding site" evidence="1">
    <location>
        <position position="153"/>
    </location>
    <ligand>
        <name>substrate</name>
    </ligand>
</feature>
<feature type="binding site" evidence="1">
    <location>
        <begin position="173"/>
        <end position="174"/>
    </location>
    <ligand>
        <name>ATP</name>
        <dbReference type="ChEBI" id="CHEBI:30616"/>
    </ligand>
</feature>
<feature type="binding site" evidence="1">
    <location>
        <begin position="215"/>
        <end position="221"/>
    </location>
    <ligand>
        <name>ATP</name>
        <dbReference type="ChEBI" id="CHEBI:30616"/>
    </ligand>
</feature>
<dbReference type="EC" id="2.7.2.11" evidence="1"/>
<dbReference type="EMBL" id="CP000931">
    <property type="protein sequence ID" value="ABZ77717.1"/>
    <property type="molecule type" value="Genomic_DNA"/>
</dbReference>
<dbReference type="RefSeq" id="WP_012278240.1">
    <property type="nucleotide sequence ID" value="NC_010334.1"/>
</dbReference>
<dbReference type="SMR" id="B0TQC5"/>
<dbReference type="STRING" id="458817.Shal_3170"/>
<dbReference type="KEGG" id="shl:Shal_3170"/>
<dbReference type="eggNOG" id="COG0263">
    <property type="taxonomic scope" value="Bacteria"/>
</dbReference>
<dbReference type="HOGENOM" id="CLU_025400_2_0_6"/>
<dbReference type="OrthoDB" id="9804434at2"/>
<dbReference type="UniPathway" id="UPA00098">
    <property type="reaction ID" value="UER00359"/>
</dbReference>
<dbReference type="Proteomes" id="UP000001317">
    <property type="component" value="Chromosome"/>
</dbReference>
<dbReference type="GO" id="GO:0005829">
    <property type="term" value="C:cytosol"/>
    <property type="evidence" value="ECO:0007669"/>
    <property type="project" value="TreeGrafter"/>
</dbReference>
<dbReference type="GO" id="GO:0005524">
    <property type="term" value="F:ATP binding"/>
    <property type="evidence" value="ECO:0007669"/>
    <property type="project" value="UniProtKB-KW"/>
</dbReference>
<dbReference type="GO" id="GO:0004349">
    <property type="term" value="F:glutamate 5-kinase activity"/>
    <property type="evidence" value="ECO:0007669"/>
    <property type="project" value="UniProtKB-UniRule"/>
</dbReference>
<dbReference type="GO" id="GO:0003723">
    <property type="term" value="F:RNA binding"/>
    <property type="evidence" value="ECO:0007669"/>
    <property type="project" value="InterPro"/>
</dbReference>
<dbReference type="GO" id="GO:0055129">
    <property type="term" value="P:L-proline biosynthetic process"/>
    <property type="evidence" value="ECO:0007669"/>
    <property type="project" value="UniProtKB-UniRule"/>
</dbReference>
<dbReference type="CDD" id="cd04242">
    <property type="entry name" value="AAK_G5K_ProB"/>
    <property type="match status" value="1"/>
</dbReference>
<dbReference type="CDD" id="cd21157">
    <property type="entry name" value="PUA_G5K"/>
    <property type="match status" value="1"/>
</dbReference>
<dbReference type="FunFam" id="2.30.130.10:FF:000007">
    <property type="entry name" value="Glutamate 5-kinase"/>
    <property type="match status" value="1"/>
</dbReference>
<dbReference type="FunFam" id="3.40.1160.10:FF:000006">
    <property type="entry name" value="Glutamate 5-kinase"/>
    <property type="match status" value="1"/>
</dbReference>
<dbReference type="Gene3D" id="3.40.1160.10">
    <property type="entry name" value="Acetylglutamate kinase-like"/>
    <property type="match status" value="2"/>
</dbReference>
<dbReference type="Gene3D" id="2.30.130.10">
    <property type="entry name" value="PUA domain"/>
    <property type="match status" value="1"/>
</dbReference>
<dbReference type="HAMAP" id="MF_00456">
    <property type="entry name" value="ProB"/>
    <property type="match status" value="1"/>
</dbReference>
<dbReference type="InterPro" id="IPR036393">
    <property type="entry name" value="AceGlu_kinase-like_sf"/>
</dbReference>
<dbReference type="InterPro" id="IPR001048">
    <property type="entry name" value="Asp/Glu/Uridylate_kinase"/>
</dbReference>
<dbReference type="InterPro" id="IPR041739">
    <property type="entry name" value="G5K_ProB"/>
</dbReference>
<dbReference type="InterPro" id="IPR001057">
    <property type="entry name" value="Glu/AcGlu_kinase"/>
</dbReference>
<dbReference type="InterPro" id="IPR011529">
    <property type="entry name" value="Glu_5kinase"/>
</dbReference>
<dbReference type="InterPro" id="IPR005715">
    <property type="entry name" value="Glu_5kinase/COase_Synthase"/>
</dbReference>
<dbReference type="InterPro" id="IPR019797">
    <property type="entry name" value="Glutamate_5-kinase_CS"/>
</dbReference>
<dbReference type="InterPro" id="IPR002478">
    <property type="entry name" value="PUA"/>
</dbReference>
<dbReference type="InterPro" id="IPR015947">
    <property type="entry name" value="PUA-like_sf"/>
</dbReference>
<dbReference type="InterPro" id="IPR036974">
    <property type="entry name" value="PUA_sf"/>
</dbReference>
<dbReference type="NCBIfam" id="TIGR01027">
    <property type="entry name" value="proB"/>
    <property type="match status" value="1"/>
</dbReference>
<dbReference type="PANTHER" id="PTHR43654">
    <property type="entry name" value="GLUTAMATE 5-KINASE"/>
    <property type="match status" value="1"/>
</dbReference>
<dbReference type="PANTHER" id="PTHR43654:SF1">
    <property type="entry name" value="ISOPENTENYL PHOSPHATE KINASE"/>
    <property type="match status" value="1"/>
</dbReference>
<dbReference type="Pfam" id="PF00696">
    <property type="entry name" value="AA_kinase"/>
    <property type="match status" value="1"/>
</dbReference>
<dbReference type="Pfam" id="PF01472">
    <property type="entry name" value="PUA"/>
    <property type="match status" value="1"/>
</dbReference>
<dbReference type="PIRSF" id="PIRSF000729">
    <property type="entry name" value="GK"/>
    <property type="match status" value="1"/>
</dbReference>
<dbReference type="PRINTS" id="PR00474">
    <property type="entry name" value="GLU5KINASE"/>
</dbReference>
<dbReference type="SMART" id="SM00359">
    <property type="entry name" value="PUA"/>
    <property type="match status" value="1"/>
</dbReference>
<dbReference type="SUPFAM" id="SSF53633">
    <property type="entry name" value="Carbamate kinase-like"/>
    <property type="match status" value="1"/>
</dbReference>
<dbReference type="SUPFAM" id="SSF88697">
    <property type="entry name" value="PUA domain-like"/>
    <property type="match status" value="1"/>
</dbReference>
<dbReference type="PROSITE" id="PS00902">
    <property type="entry name" value="GLUTAMATE_5_KINASE"/>
    <property type="match status" value="1"/>
</dbReference>
<dbReference type="PROSITE" id="PS50890">
    <property type="entry name" value="PUA"/>
    <property type="match status" value="1"/>
</dbReference>
<organism>
    <name type="scientific">Shewanella halifaxensis (strain HAW-EB4)</name>
    <dbReference type="NCBI Taxonomy" id="458817"/>
    <lineage>
        <taxon>Bacteria</taxon>
        <taxon>Pseudomonadati</taxon>
        <taxon>Pseudomonadota</taxon>
        <taxon>Gammaproteobacteria</taxon>
        <taxon>Alteromonadales</taxon>
        <taxon>Shewanellaceae</taxon>
        <taxon>Shewanella</taxon>
    </lineage>
</organism>
<comment type="function">
    <text evidence="1">Catalyzes the transfer of a phosphate group to glutamate to form L-glutamate 5-phosphate.</text>
</comment>
<comment type="catalytic activity">
    <reaction evidence="1">
        <text>L-glutamate + ATP = L-glutamyl 5-phosphate + ADP</text>
        <dbReference type="Rhea" id="RHEA:14877"/>
        <dbReference type="ChEBI" id="CHEBI:29985"/>
        <dbReference type="ChEBI" id="CHEBI:30616"/>
        <dbReference type="ChEBI" id="CHEBI:58274"/>
        <dbReference type="ChEBI" id="CHEBI:456216"/>
        <dbReference type="EC" id="2.7.2.11"/>
    </reaction>
</comment>
<comment type="pathway">
    <text evidence="1">Amino-acid biosynthesis; L-proline biosynthesis; L-glutamate 5-semialdehyde from L-glutamate: step 1/2.</text>
</comment>
<comment type="subcellular location">
    <subcellularLocation>
        <location evidence="1">Cytoplasm</location>
    </subcellularLocation>
</comment>
<comment type="similarity">
    <text evidence="1">Belongs to the glutamate 5-kinase family.</text>
</comment>
<protein>
    <recommendedName>
        <fullName evidence="1">Glutamate 5-kinase</fullName>
        <ecNumber evidence="1">2.7.2.11</ecNumber>
    </recommendedName>
    <alternativeName>
        <fullName evidence="1">Gamma-glutamyl kinase</fullName>
        <shortName evidence="1">GK</shortName>
    </alternativeName>
</protein>
<evidence type="ECO:0000255" key="1">
    <source>
        <dbReference type="HAMAP-Rule" id="MF_00456"/>
    </source>
</evidence>
<accession>B0TQC5</accession>
<keyword id="KW-0028">Amino-acid biosynthesis</keyword>
<keyword id="KW-0067">ATP-binding</keyword>
<keyword id="KW-0963">Cytoplasm</keyword>
<keyword id="KW-0418">Kinase</keyword>
<keyword id="KW-0547">Nucleotide-binding</keyword>
<keyword id="KW-0641">Proline biosynthesis</keyword>
<keyword id="KW-0808">Transferase</keyword>